<gene>
    <name evidence="1" type="primary">yggU</name>
    <name type="ordered locus">SNSL254_A3349</name>
</gene>
<name>YGGU_SALNS</name>
<evidence type="ECO:0000255" key="1">
    <source>
        <dbReference type="HAMAP-Rule" id="MF_00634"/>
    </source>
</evidence>
<dbReference type="EMBL" id="CP001113">
    <property type="protein sequence ID" value="ACF65625.1"/>
    <property type="molecule type" value="Genomic_DNA"/>
</dbReference>
<dbReference type="RefSeq" id="WP_001277203.1">
    <property type="nucleotide sequence ID" value="NZ_CCMR01000001.1"/>
</dbReference>
<dbReference type="SMR" id="B4T5K9"/>
<dbReference type="GeneID" id="66757408"/>
<dbReference type="KEGG" id="see:SNSL254_A3349"/>
<dbReference type="HOGENOM" id="CLU_130694_5_0_6"/>
<dbReference type="Proteomes" id="UP000008824">
    <property type="component" value="Chromosome"/>
</dbReference>
<dbReference type="GO" id="GO:0005737">
    <property type="term" value="C:cytoplasm"/>
    <property type="evidence" value="ECO:0007669"/>
    <property type="project" value="TreeGrafter"/>
</dbReference>
<dbReference type="Gene3D" id="3.30.1200.10">
    <property type="entry name" value="YggU-like"/>
    <property type="match status" value="1"/>
</dbReference>
<dbReference type="HAMAP" id="MF_00634">
    <property type="entry name" value="UPF0235"/>
    <property type="match status" value="1"/>
</dbReference>
<dbReference type="InterPro" id="IPR003746">
    <property type="entry name" value="DUF167"/>
</dbReference>
<dbReference type="InterPro" id="IPR036591">
    <property type="entry name" value="YggU-like_sf"/>
</dbReference>
<dbReference type="NCBIfam" id="TIGR00251">
    <property type="entry name" value="DUF167 family protein"/>
    <property type="match status" value="1"/>
</dbReference>
<dbReference type="NCBIfam" id="NF003466">
    <property type="entry name" value="PRK05090.1"/>
    <property type="match status" value="1"/>
</dbReference>
<dbReference type="PANTHER" id="PTHR13420">
    <property type="entry name" value="UPF0235 PROTEIN C15ORF40"/>
    <property type="match status" value="1"/>
</dbReference>
<dbReference type="PANTHER" id="PTHR13420:SF7">
    <property type="entry name" value="UPF0235 PROTEIN C15ORF40"/>
    <property type="match status" value="1"/>
</dbReference>
<dbReference type="Pfam" id="PF02594">
    <property type="entry name" value="DUF167"/>
    <property type="match status" value="1"/>
</dbReference>
<dbReference type="SMART" id="SM01152">
    <property type="entry name" value="DUF167"/>
    <property type="match status" value="1"/>
</dbReference>
<dbReference type="SUPFAM" id="SSF69786">
    <property type="entry name" value="YggU-like"/>
    <property type="match status" value="1"/>
</dbReference>
<sequence>MSAVTRCEDGLVLRLYIQPKASRDSIVGLHGDEVKVAITAPPVDGQANSHLIKFLGKQFRVAKSQIVIEKGELGRHKQVKIIHPQQIPPEIAALTE</sequence>
<feature type="chain" id="PRO_1000130711" description="UPF0235 protein YggU">
    <location>
        <begin position="1"/>
        <end position="96"/>
    </location>
</feature>
<organism>
    <name type="scientific">Salmonella newport (strain SL254)</name>
    <dbReference type="NCBI Taxonomy" id="423368"/>
    <lineage>
        <taxon>Bacteria</taxon>
        <taxon>Pseudomonadati</taxon>
        <taxon>Pseudomonadota</taxon>
        <taxon>Gammaproteobacteria</taxon>
        <taxon>Enterobacterales</taxon>
        <taxon>Enterobacteriaceae</taxon>
        <taxon>Salmonella</taxon>
    </lineage>
</organism>
<reference key="1">
    <citation type="journal article" date="2011" name="J. Bacteriol.">
        <title>Comparative genomics of 28 Salmonella enterica isolates: evidence for CRISPR-mediated adaptive sublineage evolution.</title>
        <authorList>
            <person name="Fricke W.F."/>
            <person name="Mammel M.K."/>
            <person name="McDermott P.F."/>
            <person name="Tartera C."/>
            <person name="White D.G."/>
            <person name="Leclerc J.E."/>
            <person name="Ravel J."/>
            <person name="Cebula T.A."/>
        </authorList>
    </citation>
    <scope>NUCLEOTIDE SEQUENCE [LARGE SCALE GENOMIC DNA]</scope>
    <source>
        <strain>SL254</strain>
    </source>
</reference>
<accession>B4T5K9</accession>
<protein>
    <recommendedName>
        <fullName evidence="1">UPF0235 protein YggU</fullName>
    </recommendedName>
</protein>
<comment type="similarity">
    <text evidence="1">Belongs to the UPF0235 family.</text>
</comment>
<proteinExistence type="inferred from homology"/>